<feature type="chain" id="PRO_0000327689" description="Pyruvate kinase">
    <location>
        <begin position="1"/>
        <end position="507"/>
    </location>
</feature>
<feature type="binding site" evidence="1">
    <location>
        <position position="50"/>
    </location>
    <ligand>
        <name>substrate</name>
    </ligand>
</feature>
<feature type="binding site" evidence="2">
    <location>
        <begin position="52"/>
        <end position="55"/>
    </location>
    <ligand>
        <name>ATP</name>
        <dbReference type="ChEBI" id="CHEBI:30616"/>
    </ligand>
</feature>
<feature type="binding site" evidence="1">
    <location>
        <position position="52"/>
    </location>
    <ligand>
        <name>K(+)</name>
        <dbReference type="ChEBI" id="CHEBI:29103"/>
    </ligand>
</feature>
<feature type="binding site" evidence="1">
    <location>
        <position position="54"/>
    </location>
    <ligand>
        <name>K(+)</name>
        <dbReference type="ChEBI" id="CHEBI:29103"/>
    </ligand>
</feature>
<feature type="binding site" evidence="1">
    <location>
        <position position="84"/>
    </location>
    <ligand>
        <name>K(+)</name>
        <dbReference type="ChEBI" id="CHEBI:29103"/>
    </ligand>
</feature>
<feature type="binding site" evidence="1">
    <location>
        <position position="85"/>
    </location>
    <ligand>
        <name>K(+)</name>
        <dbReference type="ChEBI" id="CHEBI:29103"/>
    </ligand>
</feature>
<feature type="binding site" evidence="2">
    <location>
        <position position="91"/>
    </location>
    <ligand>
        <name>ATP</name>
        <dbReference type="ChEBI" id="CHEBI:30616"/>
    </ligand>
</feature>
<feature type="binding site" evidence="2">
    <location>
        <position position="177"/>
    </location>
    <ligand>
        <name>ATP</name>
        <dbReference type="ChEBI" id="CHEBI:30616"/>
    </ligand>
</feature>
<feature type="binding site" evidence="1">
    <location>
        <position position="242"/>
    </location>
    <ligand>
        <name>Mg(2+)</name>
        <dbReference type="ChEBI" id="CHEBI:18420"/>
    </ligand>
</feature>
<feature type="binding site" evidence="1">
    <location>
        <position position="265"/>
    </location>
    <ligand>
        <name>substrate</name>
    </ligand>
</feature>
<feature type="binding site" evidence="1">
    <location>
        <position position="266"/>
    </location>
    <ligand>
        <name>Mg(2+)</name>
        <dbReference type="ChEBI" id="CHEBI:18420"/>
    </ligand>
</feature>
<feature type="binding site" evidence="1">
    <location>
        <position position="266"/>
    </location>
    <ligand>
        <name>substrate</name>
    </ligand>
</feature>
<feature type="binding site" evidence="1">
    <location>
        <position position="298"/>
    </location>
    <ligand>
        <name>substrate</name>
    </ligand>
</feature>
<feature type="site" description="Transition state stabilizer" evidence="1">
    <location>
        <position position="240"/>
    </location>
</feature>
<sequence length="507" mass="54999">MATLSRNLRLSLDTPTSTFVRTKIVCTIGPKTMSEEALIKLIETGMNVCRLNFSHGTHDYHGQVIKNVRSAMEKTGKIIAIMLDTKGPEIRTGKIEDRCGYVDLFVGQEILVDTNMNQPGTSFRISIDYKGLLDSVKVGGYILIADGVISLSITAVEKEKGHVVCRVNNNSRLGENKNVHLPGAIVNLPAVSEKDILDIKFGVEQNVDFIAASFIRKADDVNEIREILGEKGKDIQIISKIENVEGVDNFNEILEVSDGIMVARGDLGVEVQMEKIFVAQKMIVSKCNAAGKPVITATQMLESMIKNPRPTRAEATDVANAVLDGSDCVMLSGETASGDYPYEAVDIMAKICREAELVESSTDYQTLFAALKLSSAKPVSIAETVASYAVATAIDLKADLIITLTETGLTARLVSKYRPSIPIIAVTSWSYTVKHLLATRGAIPFLVESLVGTDKLVESCLEYAMKHNLCKKGSRVVIVSGVMEGVPGKTNSLRVLTVGESIKDLKV</sequence>
<dbReference type="EC" id="2.7.1.40"/>
<dbReference type="EMBL" id="AAFI02000051">
    <property type="protein sequence ID" value="EAL65862.1"/>
    <property type="molecule type" value="Genomic_DNA"/>
</dbReference>
<dbReference type="RefSeq" id="XP_639190.1">
    <property type="nucleotide sequence ID" value="XM_634098.1"/>
</dbReference>
<dbReference type="SMR" id="Q54RF5"/>
<dbReference type="FunCoup" id="Q54RF5">
    <property type="interactions" value="212"/>
</dbReference>
<dbReference type="STRING" id="44689.Q54RF5"/>
<dbReference type="PaxDb" id="44689-DDB0231421"/>
<dbReference type="EnsemblProtists" id="EAL65862">
    <property type="protein sequence ID" value="EAL65862"/>
    <property type="gene ID" value="DDB_G0283247"/>
</dbReference>
<dbReference type="GeneID" id="8623966"/>
<dbReference type="KEGG" id="ddi:DDB_G0283247"/>
<dbReference type="dictyBase" id="DDB_G0283247">
    <property type="gene designation" value="pyk"/>
</dbReference>
<dbReference type="VEuPathDB" id="AmoebaDB:DDB_G0283247"/>
<dbReference type="eggNOG" id="KOG2323">
    <property type="taxonomic scope" value="Eukaryota"/>
</dbReference>
<dbReference type="HOGENOM" id="CLU_015439_0_2_1"/>
<dbReference type="InParanoid" id="Q54RF5"/>
<dbReference type="OMA" id="HQGRYDR"/>
<dbReference type="PhylomeDB" id="Q54RF5"/>
<dbReference type="Reactome" id="R-DDI-6798695">
    <property type="pathway name" value="Neutrophil degranulation"/>
</dbReference>
<dbReference type="Reactome" id="R-DDI-70171">
    <property type="pathway name" value="Glycolysis"/>
</dbReference>
<dbReference type="Reactome" id="R-DDI-70268">
    <property type="pathway name" value="Pyruvate metabolism"/>
</dbReference>
<dbReference type="Reactome" id="R-DDI-9861718">
    <property type="pathway name" value="Regulation of pyruvate metabolism"/>
</dbReference>
<dbReference type="UniPathway" id="UPA00109">
    <property type="reaction ID" value="UER00188"/>
</dbReference>
<dbReference type="PRO" id="PR:Q54RF5"/>
<dbReference type="Proteomes" id="UP000002195">
    <property type="component" value="Chromosome 4"/>
</dbReference>
<dbReference type="GO" id="GO:0005737">
    <property type="term" value="C:cytoplasm"/>
    <property type="evidence" value="ECO:0000318"/>
    <property type="project" value="GO_Central"/>
</dbReference>
<dbReference type="GO" id="GO:0005524">
    <property type="term" value="F:ATP binding"/>
    <property type="evidence" value="ECO:0007669"/>
    <property type="project" value="UniProtKB-KW"/>
</dbReference>
<dbReference type="GO" id="GO:0016301">
    <property type="term" value="F:kinase activity"/>
    <property type="evidence" value="ECO:0007669"/>
    <property type="project" value="UniProtKB-KW"/>
</dbReference>
<dbReference type="GO" id="GO:0000287">
    <property type="term" value="F:magnesium ion binding"/>
    <property type="evidence" value="ECO:0007669"/>
    <property type="project" value="InterPro"/>
</dbReference>
<dbReference type="GO" id="GO:0030955">
    <property type="term" value="F:potassium ion binding"/>
    <property type="evidence" value="ECO:0007669"/>
    <property type="project" value="InterPro"/>
</dbReference>
<dbReference type="GO" id="GO:0004743">
    <property type="term" value="F:pyruvate kinase activity"/>
    <property type="evidence" value="ECO:0000318"/>
    <property type="project" value="GO_Central"/>
</dbReference>
<dbReference type="GO" id="GO:0006096">
    <property type="term" value="P:glycolytic process"/>
    <property type="evidence" value="ECO:0000318"/>
    <property type="project" value="GO_Central"/>
</dbReference>
<dbReference type="FunFam" id="2.40.33.10:FF:000001">
    <property type="entry name" value="Pyruvate kinase"/>
    <property type="match status" value="1"/>
</dbReference>
<dbReference type="FunFam" id="3.20.20.60:FF:000001">
    <property type="entry name" value="Pyruvate kinase"/>
    <property type="match status" value="1"/>
</dbReference>
<dbReference type="Gene3D" id="3.20.20.60">
    <property type="entry name" value="Phosphoenolpyruvate-binding domains"/>
    <property type="match status" value="1"/>
</dbReference>
<dbReference type="Gene3D" id="2.40.33.10">
    <property type="entry name" value="PK beta-barrel domain-like"/>
    <property type="match status" value="1"/>
</dbReference>
<dbReference type="Gene3D" id="3.40.1380.20">
    <property type="entry name" value="Pyruvate kinase, C-terminal domain"/>
    <property type="match status" value="1"/>
</dbReference>
<dbReference type="InterPro" id="IPR001697">
    <property type="entry name" value="Pyr_Knase"/>
</dbReference>
<dbReference type="InterPro" id="IPR015813">
    <property type="entry name" value="Pyrv/PenolPyrv_kinase-like_dom"/>
</dbReference>
<dbReference type="InterPro" id="IPR040442">
    <property type="entry name" value="Pyrv_kinase-like_dom_sf"/>
</dbReference>
<dbReference type="InterPro" id="IPR011037">
    <property type="entry name" value="Pyrv_Knase-like_insert_dom_sf"/>
</dbReference>
<dbReference type="InterPro" id="IPR018209">
    <property type="entry name" value="Pyrv_Knase_AS"/>
</dbReference>
<dbReference type="InterPro" id="IPR015793">
    <property type="entry name" value="Pyrv_Knase_brl"/>
</dbReference>
<dbReference type="InterPro" id="IPR015795">
    <property type="entry name" value="Pyrv_Knase_C"/>
</dbReference>
<dbReference type="InterPro" id="IPR036918">
    <property type="entry name" value="Pyrv_Knase_C_sf"/>
</dbReference>
<dbReference type="InterPro" id="IPR015806">
    <property type="entry name" value="Pyrv_Knase_insert_dom_sf"/>
</dbReference>
<dbReference type="NCBIfam" id="NF004491">
    <property type="entry name" value="PRK05826.1"/>
    <property type="match status" value="1"/>
</dbReference>
<dbReference type="NCBIfam" id="NF004978">
    <property type="entry name" value="PRK06354.1"/>
    <property type="match status" value="1"/>
</dbReference>
<dbReference type="NCBIfam" id="TIGR01064">
    <property type="entry name" value="pyruv_kin"/>
    <property type="match status" value="1"/>
</dbReference>
<dbReference type="PANTHER" id="PTHR11817">
    <property type="entry name" value="PYRUVATE KINASE"/>
    <property type="match status" value="1"/>
</dbReference>
<dbReference type="Pfam" id="PF00224">
    <property type="entry name" value="PK"/>
    <property type="match status" value="1"/>
</dbReference>
<dbReference type="Pfam" id="PF02887">
    <property type="entry name" value="PK_C"/>
    <property type="match status" value="1"/>
</dbReference>
<dbReference type="PRINTS" id="PR01050">
    <property type="entry name" value="PYRUVTKNASE"/>
</dbReference>
<dbReference type="SUPFAM" id="SSF51621">
    <property type="entry name" value="Phosphoenolpyruvate/pyruvate domain"/>
    <property type="match status" value="1"/>
</dbReference>
<dbReference type="SUPFAM" id="SSF50800">
    <property type="entry name" value="PK beta-barrel domain-like"/>
    <property type="match status" value="1"/>
</dbReference>
<dbReference type="SUPFAM" id="SSF52935">
    <property type="entry name" value="PK C-terminal domain-like"/>
    <property type="match status" value="1"/>
</dbReference>
<dbReference type="PROSITE" id="PS00110">
    <property type="entry name" value="PYRUVATE_KINASE"/>
    <property type="match status" value="1"/>
</dbReference>
<gene>
    <name type="primary">pyk</name>
    <name type="ORF">DDB_G0283247</name>
</gene>
<reference key="1">
    <citation type="journal article" date="2005" name="Nature">
        <title>The genome of the social amoeba Dictyostelium discoideum.</title>
        <authorList>
            <person name="Eichinger L."/>
            <person name="Pachebat J.A."/>
            <person name="Gloeckner G."/>
            <person name="Rajandream M.A."/>
            <person name="Sucgang R."/>
            <person name="Berriman M."/>
            <person name="Song J."/>
            <person name="Olsen R."/>
            <person name="Szafranski K."/>
            <person name="Xu Q."/>
            <person name="Tunggal B."/>
            <person name="Kummerfeld S."/>
            <person name="Madera M."/>
            <person name="Konfortov B.A."/>
            <person name="Rivero F."/>
            <person name="Bankier A.T."/>
            <person name="Lehmann R."/>
            <person name="Hamlin N."/>
            <person name="Davies R."/>
            <person name="Gaudet P."/>
            <person name="Fey P."/>
            <person name="Pilcher K."/>
            <person name="Chen G."/>
            <person name="Saunders D."/>
            <person name="Sodergren E.J."/>
            <person name="Davis P."/>
            <person name="Kerhornou A."/>
            <person name="Nie X."/>
            <person name="Hall N."/>
            <person name="Anjard C."/>
            <person name="Hemphill L."/>
            <person name="Bason N."/>
            <person name="Farbrother P."/>
            <person name="Desany B."/>
            <person name="Just E."/>
            <person name="Morio T."/>
            <person name="Rost R."/>
            <person name="Churcher C.M."/>
            <person name="Cooper J."/>
            <person name="Haydock S."/>
            <person name="van Driessche N."/>
            <person name="Cronin A."/>
            <person name="Goodhead I."/>
            <person name="Muzny D.M."/>
            <person name="Mourier T."/>
            <person name="Pain A."/>
            <person name="Lu M."/>
            <person name="Harper D."/>
            <person name="Lindsay R."/>
            <person name="Hauser H."/>
            <person name="James K.D."/>
            <person name="Quiles M."/>
            <person name="Madan Babu M."/>
            <person name="Saito T."/>
            <person name="Buchrieser C."/>
            <person name="Wardroper A."/>
            <person name="Felder M."/>
            <person name="Thangavelu M."/>
            <person name="Johnson D."/>
            <person name="Knights A."/>
            <person name="Loulseged H."/>
            <person name="Mungall K.L."/>
            <person name="Oliver K."/>
            <person name="Price C."/>
            <person name="Quail M.A."/>
            <person name="Urushihara H."/>
            <person name="Hernandez J."/>
            <person name="Rabbinowitsch E."/>
            <person name="Steffen D."/>
            <person name="Sanders M."/>
            <person name="Ma J."/>
            <person name="Kohara Y."/>
            <person name="Sharp S."/>
            <person name="Simmonds M.N."/>
            <person name="Spiegler S."/>
            <person name="Tivey A."/>
            <person name="Sugano S."/>
            <person name="White B."/>
            <person name="Walker D."/>
            <person name="Woodward J.R."/>
            <person name="Winckler T."/>
            <person name="Tanaka Y."/>
            <person name="Shaulsky G."/>
            <person name="Schleicher M."/>
            <person name="Weinstock G.M."/>
            <person name="Rosenthal A."/>
            <person name="Cox E.C."/>
            <person name="Chisholm R.L."/>
            <person name="Gibbs R.A."/>
            <person name="Loomis W.F."/>
            <person name="Platzer M."/>
            <person name="Kay R.R."/>
            <person name="Williams J.G."/>
            <person name="Dear P.H."/>
            <person name="Noegel A.A."/>
            <person name="Barrell B.G."/>
            <person name="Kuspa A."/>
        </authorList>
    </citation>
    <scope>NUCLEOTIDE SEQUENCE [LARGE SCALE GENOMIC DNA]</scope>
    <source>
        <strain>AX4</strain>
    </source>
</reference>
<reference key="2">
    <citation type="submission" date="2010-01" db="UniProtKB">
        <authorList>
            <person name="Bienvenut W.V."/>
            <person name="Veltman D.M."/>
            <person name="Insall R.H."/>
        </authorList>
    </citation>
    <scope>PROTEIN SEQUENCE OF 10-21; 78-91; 265-275 AND 476-489</scope>
    <scope>IDENTIFICATION BY MASS SPECTROMETRY</scope>
</reference>
<evidence type="ECO:0000250" key="1"/>
<evidence type="ECO:0000250" key="2">
    <source>
        <dbReference type="UniProtKB" id="P14618"/>
    </source>
</evidence>
<evidence type="ECO:0000305" key="3"/>
<accession>Q54RF5</accession>
<keyword id="KW-0067">ATP-binding</keyword>
<keyword id="KW-0903">Direct protein sequencing</keyword>
<keyword id="KW-0324">Glycolysis</keyword>
<keyword id="KW-0418">Kinase</keyword>
<keyword id="KW-0460">Magnesium</keyword>
<keyword id="KW-0479">Metal-binding</keyword>
<keyword id="KW-0547">Nucleotide-binding</keyword>
<keyword id="KW-0630">Potassium</keyword>
<keyword id="KW-0670">Pyruvate</keyword>
<keyword id="KW-1185">Reference proteome</keyword>
<keyword id="KW-0808">Transferase</keyword>
<organism>
    <name type="scientific">Dictyostelium discoideum</name>
    <name type="common">Social amoeba</name>
    <dbReference type="NCBI Taxonomy" id="44689"/>
    <lineage>
        <taxon>Eukaryota</taxon>
        <taxon>Amoebozoa</taxon>
        <taxon>Evosea</taxon>
        <taxon>Eumycetozoa</taxon>
        <taxon>Dictyostelia</taxon>
        <taxon>Dictyosteliales</taxon>
        <taxon>Dictyosteliaceae</taxon>
        <taxon>Dictyostelium</taxon>
    </lineage>
</organism>
<protein>
    <recommendedName>
        <fullName>Pyruvate kinase</fullName>
        <shortName>PK</shortName>
        <ecNumber>2.7.1.40</ecNumber>
    </recommendedName>
</protein>
<name>KPYK_DICDI</name>
<comment type="catalytic activity">
    <reaction>
        <text>pyruvate + ATP = phosphoenolpyruvate + ADP + H(+)</text>
        <dbReference type="Rhea" id="RHEA:18157"/>
        <dbReference type="ChEBI" id="CHEBI:15361"/>
        <dbReference type="ChEBI" id="CHEBI:15378"/>
        <dbReference type="ChEBI" id="CHEBI:30616"/>
        <dbReference type="ChEBI" id="CHEBI:58702"/>
        <dbReference type="ChEBI" id="CHEBI:456216"/>
        <dbReference type="EC" id="2.7.1.40"/>
    </reaction>
</comment>
<comment type="cofactor">
    <cofactor evidence="1">
        <name>Mg(2+)</name>
        <dbReference type="ChEBI" id="CHEBI:18420"/>
    </cofactor>
</comment>
<comment type="cofactor">
    <cofactor evidence="1">
        <name>K(+)</name>
        <dbReference type="ChEBI" id="CHEBI:29103"/>
    </cofactor>
</comment>
<comment type="pathway">
    <text>Carbohydrate degradation; glycolysis; pyruvate from D-glyceraldehyde 3-phosphate: step 5/5.</text>
</comment>
<comment type="subunit">
    <text evidence="1">Homotetramer.</text>
</comment>
<comment type="similarity">
    <text evidence="3">Belongs to the pyruvate kinase family.</text>
</comment>
<proteinExistence type="evidence at protein level"/>